<keyword id="KW-0067">ATP-binding</keyword>
<keyword id="KW-0460">Magnesium</keyword>
<keyword id="KW-0547">Nucleotide-binding</keyword>
<keyword id="KW-0808">Transferase</keyword>
<keyword id="KW-0819">tRNA processing</keyword>
<dbReference type="EC" id="2.5.1.75" evidence="1"/>
<dbReference type="EMBL" id="AE017194">
    <property type="protein sequence ID" value="AAS42646.1"/>
    <property type="molecule type" value="Genomic_DNA"/>
</dbReference>
<dbReference type="SMR" id="Q733B9"/>
<dbReference type="KEGG" id="bca:BCE_3741"/>
<dbReference type="HOGENOM" id="CLU_032616_0_1_9"/>
<dbReference type="Proteomes" id="UP000002527">
    <property type="component" value="Chromosome"/>
</dbReference>
<dbReference type="GO" id="GO:0005524">
    <property type="term" value="F:ATP binding"/>
    <property type="evidence" value="ECO:0007669"/>
    <property type="project" value="UniProtKB-UniRule"/>
</dbReference>
<dbReference type="GO" id="GO:0052381">
    <property type="term" value="F:tRNA dimethylallyltransferase activity"/>
    <property type="evidence" value="ECO:0007669"/>
    <property type="project" value="UniProtKB-UniRule"/>
</dbReference>
<dbReference type="GO" id="GO:0006400">
    <property type="term" value="P:tRNA modification"/>
    <property type="evidence" value="ECO:0007669"/>
    <property type="project" value="TreeGrafter"/>
</dbReference>
<dbReference type="FunFam" id="1.10.20.140:FF:000001">
    <property type="entry name" value="tRNA dimethylallyltransferase"/>
    <property type="match status" value="1"/>
</dbReference>
<dbReference type="Gene3D" id="1.10.20.140">
    <property type="match status" value="1"/>
</dbReference>
<dbReference type="Gene3D" id="3.40.50.300">
    <property type="entry name" value="P-loop containing nucleotide triphosphate hydrolases"/>
    <property type="match status" value="1"/>
</dbReference>
<dbReference type="HAMAP" id="MF_00185">
    <property type="entry name" value="IPP_trans"/>
    <property type="match status" value="1"/>
</dbReference>
<dbReference type="InterPro" id="IPR039657">
    <property type="entry name" value="Dimethylallyltransferase"/>
</dbReference>
<dbReference type="InterPro" id="IPR018022">
    <property type="entry name" value="IPT"/>
</dbReference>
<dbReference type="InterPro" id="IPR027417">
    <property type="entry name" value="P-loop_NTPase"/>
</dbReference>
<dbReference type="NCBIfam" id="TIGR00174">
    <property type="entry name" value="miaA"/>
    <property type="match status" value="1"/>
</dbReference>
<dbReference type="PANTHER" id="PTHR11088">
    <property type="entry name" value="TRNA DIMETHYLALLYLTRANSFERASE"/>
    <property type="match status" value="1"/>
</dbReference>
<dbReference type="PANTHER" id="PTHR11088:SF60">
    <property type="entry name" value="TRNA DIMETHYLALLYLTRANSFERASE"/>
    <property type="match status" value="1"/>
</dbReference>
<dbReference type="Pfam" id="PF01715">
    <property type="entry name" value="IPPT"/>
    <property type="match status" value="1"/>
</dbReference>
<dbReference type="SUPFAM" id="SSF52540">
    <property type="entry name" value="P-loop containing nucleoside triphosphate hydrolases"/>
    <property type="match status" value="1"/>
</dbReference>
<reference key="1">
    <citation type="journal article" date="2004" name="Nucleic Acids Res.">
        <title>The genome sequence of Bacillus cereus ATCC 10987 reveals metabolic adaptations and a large plasmid related to Bacillus anthracis pXO1.</title>
        <authorList>
            <person name="Rasko D.A."/>
            <person name="Ravel J."/>
            <person name="Oekstad O.A."/>
            <person name="Helgason E."/>
            <person name="Cer R.Z."/>
            <person name="Jiang L."/>
            <person name="Shores K.A."/>
            <person name="Fouts D.E."/>
            <person name="Tourasse N.J."/>
            <person name="Angiuoli S.V."/>
            <person name="Kolonay J.F."/>
            <person name="Nelson W.C."/>
            <person name="Kolstoe A.-B."/>
            <person name="Fraser C.M."/>
            <person name="Read T.D."/>
        </authorList>
    </citation>
    <scope>NUCLEOTIDE SEQUENCE [LARGE SCALE GENOMIC DNA]</scope>
    <source>
        <strain>ATCC 10987 / NRS 248</strain>
    </source>
</reference>
<gene>
    <name evidence="1" type="primary">miaA</name>
    <name type="ordered locus">BCE_3741</name>
</gene>
<accession>Q733B9</accession>
<comment type="function">
    <text evidence="1">Catalyzes the transfer of a dimethylallyl group onto the adenine at position 37 in tRNAs that read codons beginning with uridine, leading to the formation of N6-(dimethylallyl)adenosine (i(6)A).</text>
</comment>
<comment type="catalytic activity">
    <reaction evidence="1">
        <text>adenosine(37) in tRNA + dimethylallyl diphosphate = N(6)-dimethylallyladenosine(37) in tRNA + diphosphate</text>
        <dbReference type="Rhea" id="RHEA:26482"/>
        <dbReference type="Rhea" id="RHEA-COMP:10162"/>
        <dbReference type="Rhea" id="RHEA-COMP:10375"/>
        <dbReference type="ChEBI" id="CHEBI:33019"/>
        <dbReference type="ChEBI" id="CHEBI:57623"/>
        <dbReference type="ChEBI" id="CHEBI:74411"/>
        <dbReference type="ChEBI" id="CHEBI:74415"/>
        <dbReference type="EC" id="2.5.1.75"/>
    </reaction>
</comment>
<comment type="cofactor">
    <cofactor evidence="1">
        <name>Mg(2+)</name>
        <dbReference type="ChEBI" id="CHEBI:18420"/>
    </cofactor>
</comment>
<comment type="subunit">
    <text evidence="1">Monomer.</text>
</comment>
<comment type="similarity">
    <text evidence="1">Belongs to the IPP transferase family.</text>
</comment>
<name>MIAA_BACC1</name>
<evidence type="ECO:0000255" key="1">
    <source>
        <dbReference type="HAMAP-Rule" id="MF_00185"/>
    </source>
</evidence>
<proteinExistence type="inferred from homology"/>
<organism>
    <name type="scientific">Bacillus cereus (strain ATCC 10987 / NRS 248)</name>
    <dbReference type="NCBI Taxonomy" id="222523"/>
    <lineage>
        <taxon>Bacteria</taxon>
        <taxon>Bacillati</taxon>
        <taxon>Bacillota</taxon>
        <taxon>Bacilli</taxon>
        <taxon>Bacillales</taxon>
        <taxon>Bacillaceae</taxon>
        <taxon>Bacillus</taxon>
        <taxon>Bacillus cereus group</taxon>
    </lineage>
</organism>
<feature type="chain" id="PRO_0000163869" description="tRNA dimethylallyltransferase">
    <location>
        <begin position="1"/>
        <end position="317"/>
    </location>
</feature>
<feature type="region of interest" description="Interaction with substrate tRNA" evidence="1">
    <location>
        <begin position="39"/>
        <end position="42"/>
    </location>
</feature>
<feature type="binding site" evidence="1">
    <location>
        <begin position="14"/>
        <end position="21"/>
    </location>
    <ligand>
        <name>ATP</name>
        <dbReference type="ChEBI" id="CHEBI:30616"/>
    </ligand>
</feature>
<feature type="binding site" evidence="1">
    <location>
        <begin position="16"/>
        <end position="21"/>
    </location>
    <ligand>
        <name>substrate</name>
    </ligand>
</feature>
<feature type="site" description="Interaction with substrate tRNA" evidence="1">
    <location>
        <position position="105"/>
    </location>
</feature>
<feature type="site" description="Interaction with substrate tRNA" evidence="1">
    <location>
        <position position="128"/>
    </location>
</feature>
<sequence length="317" mass="36703">MGEVQREKVAVIIGPTAVGKTKLSIDLAKALNGEIISGDSMQIYRTMDIGTAKVTKEEMDGIPHYMVDIKNPEESFSVAEFQERVRKHIREITERGKLPIIVGGTGLYIQSVLFDYQFTDDAGDVIYREHMEKLALERGVEYVHKKLQEVDPESAERIHANNVRRVIRALEIFHTTGEKMSDQLEKQENELLYDVSLIGLTMDREMLYDRINLRVDIMMDQGLLEEVEGLYNRGIRDCQSIQAIGYKEIYDYFEDRVSLEEAVSQLKTNSRRYAKRQLTWFRNKMDVTWFDVTDGEKTSEILRYIEGKLQLKSNNSK</sequence>
<protein>
    <recommendedName>
        <fullName evidence="1">tRNA dimethylallyltransferase</fullName>
        <ecNumber evidence="1">2.5.1.75</ecNumber>
    </recommendedName>
    <alternativeName>
        <fullName evidence="1">Dimethylallyl diphosphate:tRNA dimethylallyltransferase</fullName>
        <shortName evidence="1">DMAPP:tRNA dimethylallyltransferase</shortName>
        <shortName evidence="1">DMATase</shortName>
    </alternativeName>
    <alternativeName>
        <fullName evidence="1">Isopentenyl-diphosphate:tRNA isopentenyltransferase</fullName>
        <shortName evidence="1">IPP transferase</shortName>
        <shortName evidence="1">IPPT</shortName>
        <shortName evidence="1">IPTase</shortName>
    </alternativeName>
</protein>